<name>SEPF_CLOTE</name>
<gene>
    <name evidence="1" type="primary">sepF</name>
    <name type="ordered locus">CTC_01623</name>
</gene>
<dbReference type="EMBL" id="AE015927">
    <property type="protein sequence ID" value="AAO36166.1"/>
    <property type="molecule type" value="Genomic_DNA"/>
</dbReference>
<dbReference type="RefSeq" id="WP_011099826.1">
    <property type="nucleotide sequence ID" value="NC_004557.1"/>
</dbReference>
<dbReference type="SMR" id="Q894C6"/>
<dbReference type="STRING" id="212717.CTC_01623"/>
<dbReference type="GeneID" id="24254908"/>
<dbReference type="KEGG" id="ctc:CTC_01623"/>
<dbReference type="HOGENOM" id="CLU_078499_4_0_9"/>
<dbReference type="OrthoDB" id="9815206at2"/>
<dbReference type="Proteomes" id="UP000001412">
    <property type="component" value="Chromosome"/>
</dbReference>
<dbReference type="GO" id="GO:0005737">
    <property type="term" value="C:cytoplasm"/>
    <property type="evidence" value="ECO:0007669"/>
    <property type="project" value="UniProtKB-SubCell"/>
</dbReference>
<dbReference type="GO" id="GO:0000917">
    <property type="term" value="P:division septum assembly"/>
    <property type="evidence" value="ECO:0007669"/>
    <property type="project" value="UniProtKB-KW"/>
</dbReference>
<dbReference type="GO" id="GO:0043093">
    <property type="term" value="P:FtsZ-dependent cytokinesis"/>
    <property type="evidence" value="ECO:0007669"/>
    <property type="project" value="UniProtKB-UniRule"/>
</dbReference>
<dbReference type="Gene3D" id="3.30.110.150">
    <property type="entry name" value="SepF-like protein"/>
    <property type="match status" value="1"/>
</dbReference>
<dbReference type="HAMAP" id="MF_01197">
    <property type="entry name" value="SepF"/>
    <property type="match status" value="1"/>
</dbReference>
<dbReference type="InterPro" id="IPR023052">
    <property type="entry name" value="Cell_div_SepF"/>
</dbReference>
<dbReference type="InterPro" id="IPR007561">
    <property type="entry name" value="Cell_div_SepF/SepF-rel"/>
</dbReference>
<dbReference type="InterPro" id="IPR038594">
    <property type="entry name" value="SepF-like_sf"/>
</dbReference>
<dbReference type="PANTHER" id="PTHR35798">
    <property type="entry name" value="CELL DIVISION PROTEIN SEPF"/>
    <property type="match status" value="1"/>
</dbReference>
<dbReference type="PANTHER" id="PTHR35798:SF1">
    <property type="entry name" value="CELL DIVISION PROTEIN SEPF"/>
    <property type="match status" value="1"/>
</dbReference>
<dbReference type="Pfam" id="PF04472">
    <property type="entry name" value="SepF"/>
    <property type="match status" value="1"/>
</dbReference>
<comment type="function">
    <text evidence="1">Cell division protein that is part of the divisome complex and is recruited early to the Z-ring. Probably stimulates Z-ring formation, perhaps through the cross-linking of FtsZ protofilaments. Its function overlaps with FtsA.</text>
</comment>
<comment type="subunit">
    <text evidence="1">Homodimer. Interacts with FtsZ.</text>
</comment>
<comment type="subcellular location">
    <subcellularLocation>
        <location evidence="1">Cytoplasm</location>
    </subcellularLocation>
    <text evidence="1">Localizes to the division site, in a FtsZ-dependent manner.</text>
</comment>
<comment type="similarity">
    <text evidence="1">Belongs to the SepF family.</text>
</comment>
<sequence length="153" mass="17173">MAGKVLNKVMGFLGLEDEYEYEEYYEDTDELENSNESAEFEPIIHSNKKQGKVVSIHSTSTPKVSIVKPKTYDEVVDICDDLKDGKIVIVNSIELDPKVGQRLVDFVSGATYSLNGTLEEIEKGIYILSPSNVEVDSELKNQLSSKGMFSWNR</sequence>
<organism>
    <name type="scientific">Clostridium tetani (strain Massachusetts / E88)</name>
    <dbReference type="NCBI Taxonomy" id="212717"/>
    <lineage>
        <taxon>Bacteria</taxon>
        <taxon>Bacillati</taxon>
        <taxon>Bacillota</taxon>
        <taxon>Clostridia</taxon>
        <taxon>Eubacteriales</taxon>
        <taxon>Clostridiaceae</taxon>
        <taxon>Clostridium</taxon>
    </lineage>
</organism>
<accession>Q894C6</accession>
<reference key="1">
    <citation type="journal article" date="2003" name="Proc. Natl. Acad. Sci. U.S.A.">
        <title>The genome sequence of Clostridium tetani, the causative agent of tetanus disease.</title>
        <authorList>
            <person name="Brueggemann H."/>
            <person name="Baeumer S."/>
            <person name="Fricke W.F."/>
            <person name="Wiezer A."/>
            <person name="Liesegang H."/>
            <person name="Decker I."/>
            <person name="Herzberg C."/>
            <person name="Martinez-Arias R."/>
            <person name="Merkl R."/>
            <person name="Henne A."/>
            <person name="Gottschalk G."/>
        </authorList>
    </citation>
    <scope>NUCLEOTIDE SEQUENCE [LARGE SCALE GENOMIC DNA]</scope>
    <source>
        <strain>Massachusetts / E88</strain>
    </source>
</reference>
<protein>
    <recommendedName>
        <fullName evidence="1">Cell division protein SepF</fullName>
    </recommendedName>
</protein>
<evidence type="ECO:0000255" key="1">
    <source>
        <dbReference type="HAMAP-Rule" id="MF_01197"/>
    </source>
</evidence>
<keyword id="KW-0131">Cell cycle</keyword>
<keyword id="KW-0132">Cell division</keyword>
<keyword id="KW-0963">Cytoplasm</keyword>
<keyword id="KW-1185">Reference proteome</keyword>
<keyword id="KW-0717">Septation</keyword>
<proteinExistence type="inferred from homology"/>
<feature type="chain" id="PRO_0000334003" description="Cell division protein SepF">
    <location>
        <begin position="1"/>
        <end position="153"/>
    </location>
</feature>